<dbReference type="EC" id="2.7.11.33" evidence="1"/>
<dbReference type="EC" id="2.7.4.28" evidence="1"/>
<dbReference type="EMBL" id="AM747720">
    <property type="protein sequence ID" value="CAR52375.1"/>
    <property type="molecule type" value="Genomic_DNA"/>
</dbReference>
<dbReference type="RefSeq" id="WP_006483812.1">
    <property type="nucleotide sequence ID" value="NC_011000.1"/>
</dbReference>
<dbReference type="SMR" id="B4EC82"/>
<dbReference type="KEGG" id="bcj:BCAL2075"/>
<dbReference type="eggNOG" id="COG1806">
    <property type="taxonomic scope" value="Bacteria"/>
</dbReference>
<dbReference type="HOGENOM" id="CLU_046206_1_0_4"/>
<dbReference type="BioCyc" id="BCEN216591:G1G1V-2275-MONOMER"/>
<dbReference type="Proteomes" id="UP000001035">
    <property type="component" value="Chromosome 1"/>
</dbReference>
<dbReference type="GO" id="GO:0043531">
    <property type="term" value="F:ADP binding"/>
    <property type="evidence" value="ECO:0007669"/>
    <property type="project" value="UniProtKB-UniRule"/>
</dbReference>
<dbReference type="GO" id="GO:0005524">
    <property type="term" value="F:ATP binding"/>
    <property type="evidence" value="ECO:0007669"/>
    <property type="project" value="InterPro"/>
</dbReference>
<dbReference type="GO" id="GO:0016776">
    <property type="term" value="F:phosphotransferase activity, phosphate group as acceptor"/>
    <property type="evidence" value="ECO:0007669"/>
    <property type="project" value="UniProtKB-UniRule"/>
</dbReference>
<dbReference type="GO" id="GO:0004674">
    <property type="term" value="F:protein serine/threonine kinase activity"/>
    <property type="evidence" value="ECO:0007669"/>
    <property type="project" value="UniProtKB-UniRule"/>
</dbReference>
<dbReference type="HAMAP" id="MF_01062">
    <property type="entry name" value="PSRP"/>
    <property type="match status" value="1"/>
</dbReference>
<dbReference type="InterPro" id="IPR005177">
    <property type="entry name" value="Kinase-pyrophosphorylase"/>
</dbReference>
<dbReference type="InterPro" id="IPR026530">
    <property type="entry name" value="PSRP"/>
</dbReference>
<dbReference type="NCBIfam" id="NF003742">
    <property type="entry name" value="PRK05339.1"/>
    <property type="match status" value="1"/>
</dbReference>
<dbReference type="PANTHER" id="PTHR31756">
    <property type="entry name" value="PYRUVATE, PHOSPHATE DIKINASE REGULATORY PROTEIN 1, CHLOROPLASTIC"/>
    <property type="match status" value="1"/>
</dbReference>
<dbReference type="PANTHER" id="PTHR31756:SF3">
    <property type="entry name" value="PYRUVATE, PHOSPHATE DIKINASE REGULATORY PROTEIN 1, CHLOROPLASTIC"/>
    <property type="match status" value="1"/>
</dbReference>
<dbReference type="Pfam" id="PF03618">
    <property type="entry name" value="Kinase-PPPase"/>
    <property type="match status" value="1"/>
</dbReference>
<name>PSRP_BURCJ</name>
<sequence>MLPTVFIVSDGTGITAETFAHSILSQFDQKFRLVRVPFVDSLDKAYATVEKINEAAVHDGRRAIVFTTLVDSESNDIVKRSNALVLDMFQRFVEPLEQELELKSSHAMGRGHQNADTEEYKTRIEAINFSLAHDDGQSNRNLSEADVILVGVSRSGKTPTSLYLAMQYGVKAANYPLIPEDFERGKLPSALSPYSEKLFGLSIDPQRLSEIRNERRPGSKYAAPENCRYEINEAEAMMRREGIKWLSSTHKSIEEIATTILQEIRLDRQSY</sequence>
<comment type="function">
    <text evidence="1">Bifunctional serine/threonine kinase and phosphorylase involved in the regulation of the phosphoenolpyruvate synthase (PEPS) by catalyzing its phosphorylation/dephosphorylation.</text>
</comment>
<comment type="catalytic activity">
    <reaction evidence="1">
        <text>[pyruvate, water dikinase] + ADP = [pyruvate, water dikinase]-phosphate + AMP + H(+)</text>
        <dbReference type="Rhea" id="RHEA:46020"/>
        <dbReference type="Rhea" id="RHEA-COMP:11425"/>
        <dbReference type="Rhea" id="RHEA-COMP:11426"/>
        <dbReference type="ChEBI" id="CHEBI:15378"/>
        <dbReference type="ChEBI" id="CHEBI:43176"/>
        <dbReference type="ChEBI" id="CHEBI:68546"/>
        <dbReference type="ChEBI" id="CHEBI:456215"/>
        <dbReference type="ChEBI" id="CHEBI:456216"/>
        <dbReference type="EC" id="2.7.11.33"/>
    </reaction>
</comment>
<comment type="catalytic activity">
    <reaction evidence="1">
        <text>[pyruvate, water dikinase]-phosphate + phosphate + H(+) = [pyruvate, water dikinase] + diphosphate</text>
        <dbReference type="Rhea" id="RHEA:48580"/>
        <dbReference type="Rhea" id="RHEA-COMP:11425"/>
        <dbReference type="Rhea" id="RHEA-COMP:11426"/>
        <dbReference type="ChEBI" id="CHEBI:15378"/>
        <dbReference type="ChEBI" id="CHEBI:33019"/>
        <dbReference type="ChEBI" id="CHEBI:43176"/>
        <dbReference type="ChEBI" id="CHEBI:43474"/>
        <dbReference type="ChEBI" id="CHEBI:68546"/>
        <dbReference type="EC" id="2.7.4.28"/>
    </reaction>
</comment>
<comment type="similarity">
    <text evidence="1">Belongs to the pyruvate, phosphate/water dikinase regulatory protein family. PSRP subfamily.</text>
</comment>
<reference key="1">
    <citation type="journal article" date="2009" name="J. Bacteriol.">
        <title>The genome of Burkholderia cenocepacia J2315, an epidemic pathogen of cystic fibrosis patients.</title>
        <authorList>
            <person name="Holden M.T."/>
            <person name="Seth-Smith H.M."/>
            <person name="Crossman L.C."/>
            <person name="Sebaihia M."/>
            <person name="Bentley S.D."/>
            <person name="Cerdeno-Tarraga A.M."/>
            <person name="Thomson N.R."/>
            <person name="Bason N."/>
            <person name="Quail M.A."/>
            <person name="Sharp S."/>
            <person name="Cherevach I."/>
            <person name="Churcher C."/>
            <person name="Goodhead I."/>
            <person name="Hauser H."/>
            <person name="Holroyd N."/>
            <person name="Mungall K."/>
            <person name="Scott P."/>
            <person name="Walker D."/>
            <person name="White B."/>
            <person name="Rose H."/>
            <person name="Iversen P."/>
            <person name="Mil-Homens D."/>
            <person name="Rocha E.P."/>
            <person name="Fialho A.M."/>
            <person name="Baldwin A."/>
            <person name="Dowson C."/>
            <person name="Barrell B.G."/>
            <person name="Govan J.R."/>
            <person name="Vandamme P."/>
            <person name="Hart C.A."/>
            <person name="Mahenthiralingam E."/>
            <person name="Parkhill J."/>
        </authorList>
    </citation>
    <scope>NUCLEOTIDE SEQUENCE [LARGE SCALE GENOMIC DNA]</scope>
    <source>
        <strain>ATCC BAA-245 / DSM 16553 / LMG 16656 / NCTC 13227 / J2315 / CF5610</strain>
    </source>
</reference>
<proteinExistence type="inferred from homology"/>
<evidence type="ECO:0000255" key="1">
    <source>
        <dbReference type="HAMAP-Rule" id="MF_01062"/>
    </source>
</evidence>
<organism>
    <name type="scientific">Burkholderia cenocepacia (strain ATCC BAA-245 / DSM 16553 / LMG 16656 / NCTC 13227 / J2315 / CF5610)</name>
    <name type="common">Burkholderia cepacia (strain J2315)</name>
    <dbReference type="NCBI Taxonomy" id="216591"/>
    <lineage>
        <taxon>Bacteria</taxon>
        <taxon>Pseudomonadati</taxon>
        <taxon>Pseudomonadota</taxon>
        <taxon>Betaproteobacteria</taxon>
        <taxon>Burkholderiales</taxon>
        <taxon>Burkholderiaceae</taxon>
        <taxon>Burkholderia</taxon>
        <taxon>Burkholderia cepacia complex</taxon>
    </lineage>
</organism>
<feature type="chain" id="PRO_1000136458" description="Putative phosphoenolpyruvate synthase regulatory protein">
    <location>
        <begin position="1"/>
        <end position="271"/>
    </location>
</feature>
<feature type="binding site" evidence="1">
    <location>
        <begin position="151"/>
        <end position="158"/>
    </location>
    <ligand>
        <name>ADP</name>
        <dbReference type="ChEBI" id="CHEBI:456216"/>
    </ligand>
</feature>
<protein>
    <recommendedName>
        <fullName evidence="1">Putative phosphoenolpyruvate synthase regulatory protein</fullName>
        <shortName evidence="1">PEP synthase regulatory protein</shortName>
        <shortName evidence="1">PSRP</shortName>
        <ecNumber evidence="1">2.7.11.33</ecNumber>
        <ecNumber evidence="1">2.7.4.28</ecNumber>
    </recommendedName>
    <alternativeName>
        <fullName evidence="1">Pyruvate, water dikinase regulatory protein</fullName>
    </alternativeName>
</protein>
<accession>B4EC82</accession>
<keyword id="KW-0418">Kinase</keyword>
<keyword id="KW-0547">Nucleotide-binding</keyword>
<keyword id="KW-0723">Serine/threonine-protein kinase</keyword>
<keyword id="KW-0808">Transferase</keyword>
<gene>
    <name type="ordered locus">BceJ2315_20370</name>
    <name type="ORF">BCAL2075</name>
</gene>